<protein>
    <recommendedName>
        <fullName evidence="2">Translation initiation factor IF-2</fullName>
    </recommendedName>
</protein>
<accession>Q3MBZ7</accession>
<dbReference type="EMBL" id="CP000117">
    <property type="protein sequence ID" value="ABA21489.1"/>
    <property type="molecule type" value="Genomic_DNA"/>
</dbReference>
<dbReference type="SMR" id="Q3MBZ7"/>
<dbReference type="STRING" id="240292.Ava_1867"/>
<dbReference type="KEGG" id="ava:Ava_1867"/>
<dbReference type="eggNOG" id="COG0532">
    <property type="taxonomic scope" value="Bacteria"/>
</dbReference>
<dbReference type="eggNOG" id="COG3266">
    <property type="taxonomic scope" value="Bacteria"/>
</dbReference>
<dbReference type="HOGENOM" id="CLU_006301_7_0_3"/>
<dbReference type="Proteomes" id="UP000002533">
    <property type="component" value="Chromosome"/>
</dbReference>
<dbReference type="GO" id="GO:0005829">
    <property type="term" value="C:cytosol"/>
    <property type="evidence" value="ECO:0007669"/>
    <property type="project" value="TreeGrafter"/>
</dbReference>
<dbReference type="GO" id="GO:0005525">
    <property type="term" value="F:GTP binding"/>
    <property type="evidence" value="ECO:0007669"/>
    <property type="project" value="UniProtKB-KW"/>
</dbReference>
<dbReference type="GO" id="GO:0003924">
    <property type="term" value="F:GTPase activity"/>
    <property type="evidence" value="ECO:0007669"/>
    <property type="project" value="UniProtKB-UniRule"/>
</dbReference>
<dbReference type="GO" id="GO:0003743">
    <property type="term" value="F:translation initiation factor activity"/>
    <property type="evidence" value="ECO:0007669"/>
    <property type="project" value="UniProtKB-UniRule"/>
</dbReference>
<dbReference type="CDD" id="cd01887">
    <property type="entry name" value="IF2_eIF5B"/>
    <property type="match status" value="1"/>
</dbReference>
<dbReference type="CDD" id="cd03702">
    <property type="entry name" value="IF2_mtIF2_II"/>
    <property type="match status" value="1"/>
</dbReference>
<dbReference type="CDD" id="cd03692">
    <property type="entry name" value="mtIF2_IVc"/>
    <property type="match status" value="1"/>
</dbReference>
<dbReference type="FunFam" id="2.40.30.10:FF:000007">
    <property type="entry name" value="Translation initiation factor IF-2"/>
    <property type="match status" value="1"/>
</dbReference>
<dbReference type="FunFam" id="2.40.30.10:FF:000008">
    <property type="entry name" value="Translation initiation factor IF-2"/>
    <property type="match status" value="1"/>
</dbReference>
<dbReference type="FunFam" id="3.40.50.10050:FF:000001">
    <property type="entry name" value="Translation initiation factor IF-2"/>
    <property type="match status" value="1"/>
</dbReference>
<dbReference type="FunFam" id="3.40.50.300:FF:000019">
    <property type="entry name" value="Translation initiation factor IF-2"/>
    <property type="match status" value="1"/>
</dbReference>
<dbReference type="Gene3D" id="1.10.10.2480">
    <property type="match status" value="1"/>
</dbReference>
<dbReference type="Gene3D" id="3.40.50.300">
    <property type="entry name" value="P-loop containing nucleotide triphosphate hydrolases"/>
    <property type="match status" value="1"/>
</dbReference>
<dbReference type="Gene3D" id="2.40.30.10">
    <property type="entry name" value="Translation factors"/>
    <property type="match status" value="2"/>
</dbReference>
<dbReference type="Gene3D" id="3.40.50.10050">
    <property type="entry name" value="Translation initiation factor IF- 2, domain 3"/>
    <property type="match status" value="1"/>
</dbReference>
<dbReference type="HAMAP" id="MF_00100_B">
    <property type="entry name" value="IF_2_B"/>
    <property type="match status" value="1"/>
</dbReference>
<dbReference type="InterPro" id="IPR053905">
    <property type="entry name" value="EF-G-like_DII"/>
</dbReference>
<dbReference type="InterPro" id="IPR044145">
    <property type="entry name" value="IF2_II"/>
</dbReference>
<dbReference type="InterPro" id="IPR006847">
    <property type="entry name" value="IF2_N"/>
</dbReference>
<dbReference type="InterPro" id="IPR027417">
    <property type="entry name" value="P-loop_NTPase"/>
</dbReference>
<dbReference type="InterPro" id="IPR005225">
    <property type="entry name" value="Small_GTP-bd"/>
</dbReference>
<dbReference type="InterPro" id="IPR000795">
    <property type="entry name" value="T_Tr_GTP-bd_dom"/>
</dbReference>
<dbReference type="InterPro" id="IPR000178">
    <property type="entry name" value="TF_IF2_bacterial-like"/>
</dbReference>
<dbReference type="InterPro" id="IPR015760">
    <property type="entry name" value="TIF_IF2"/>
</dbReference>
<dbReference type="InterPro" id="IPR023115">
    <property type="entry name" value="TIF_IF2_dom3"/>
</dbReference>
<dbReference type="InterPro" id="IPR036925">
    <property type="entry name" value="TIF_IF2_dom3_sf"/>
</dbReference>
<dbReference type="InterPro" id="IPR009000">
    <property type="entry name" value="Transl_B-barrel_sf"/>
</dbReference>
<dbReference type="NCBIfam" id="TIGR00487">
    <property type="entry name" value="IF-2"/>
    <property type="match status" value="1"/>
</dbReference>
<dbReference type="NCBIfam" id="TIGR00231">
    <property type="entry name" value="small_GTP"/>
    <property type="match status" value="1"/>
</dbReference>
<dbReference type="PANTHER" id="PTHR43381:SF5">
    <property type="entry name" value="TR-TYPE G DOMAIN-CONTAINING PROTEIN"/>
    <property type="match status" value="1"/>
</dbReference>
<dbReference type="PANTHER" id="PTHR43381">
    <property type="entry name" value="TRANSLATION INITIATION FACTOR IF-2-RELATED"/>
    <property type="match status" value="1"/>
</dbReference>
<dbReference type="Pfam" id="PF22042">
    <property type="entry name" value="EF-G_D2"/>
    <property type="match status" value="1"/>
</dbReference>
<dbReference type="Pfam" id="PF00009">
    <property type="entry name" value="GTP_EFTU"/>
    <property type="match status" value="1"/>
</dbReference>
<dbReference type="Pfam" id="PF11987">
    <property type="entry name" value="IF-2"/>
    <property type="match status" value="1"/>
</dbReference>
<dbReference type="Pfam" id="PF04760">
    <property type="entry name" value="IF2_N"/>
    <property type="match status" value="2"/>
</dbReference>
<dbReference type="PRINTS" id="PR00315">
    <property type="entry name" value="ELONGATNFCT"/>
</dbReference>
<dbReference type="SUPFAM" id="SSF52156">
    <property type="entry name" value="Initiation factor IF2/eIF5b, domain 3"/>
    <property type="match status" value="1"/>
</dbReference>
<dbReference type="SUPFAM" id="SSF52540">
    <property type="entry name" value="P-loop containing nucleoside triphosphate hydrolases"/>
    <property type="match status" value="1"/>
</dbReference>
<dbReference type="SUPFAM" id="SSF50447">
    <property type="entry name" value="Translation proteins"/>
    <property type="match status" value="2"/>
</dbReference>
<dbReference type="PROSITE" id="PS51722">
    <property type="entry name" value="G_TR_2"/>
    <property type="match status" value="1"/>
</dbReference>
<dbReference type="PROSITE" id="PS01176">
    <property type="entry name" value="IF2"/>
    <property type="match status" value="1"/>
</dbReference>
<keyword id="KW-0963">Cytoplasm</keyword>
<keyword id="KW-0342">GTP-binding</keyword>
<keyword id="KW-0396">Initiation factor</keyword>
<keyword id="KW-0547">Nucleotide-binding</keyword>
<keyword id="KW-0648">Protein biosynthesis</keyword>
<reference key="1">
    <citation type="journal article" date="2014" name="Stand. Genomic Sci.">
        <title>Complete genome sequence of Anabaena variabilis ATCC 29413.</title>
        <authorList>
            <person name="Thiel T."/>
            <person name="Pratte B.S."/>
            <person name="Zhong J."/>
            <person name="Goodwin L."/>
            <person name="Copeland A."/>
            <person name="Lucas S."/>
            <person name="Han C."/>
            <person name="Pitluck S."/>
            <person name="Land M.L."/>
            <person name="Kyrpides N.C."/>
            <person name="Woyke T."/>
        </authorList>
    </citation>
    <scope>NUCLEOTIDE SEQUENCE [LARGE SCALE GENOMIC DNA]</scope>
    <source>
        <strain>ATCC 29413 / PCC 7937</strain>
    </source>
</reference>
<proteinExistence type="inferred from homology"/>
<organism>
    <name type="scientific">Trichormus variabilis (strain ATCC 29413 / PCC 7937)</name>
    <name type="common">Anabaena variabilis</name>
    <dbReference type="NCBI Taxonomy" id="240292"/>
    <lineage>
        <taxon>Bacteria</taxon>
        <taxon>Bacillati</taxon>
        <taxon>Cyanobacteriota</taxon>
        <taxon>Cyanophyceae</taxon>
        <taxon>Nostocales</taxon>
        <taxon>Nostocaceae</taxon>
        <taxon>Trichormus</taxon>
    </lineage>
</organism>
<gene>
    <name evidence="2" type="primary">infB</name>
    <name type="ordered locus">Ava_1867</name>
</gene>
<comment type="function">
    <text evidence="2">One of the essential components for the initiation of protein synthesis. Protects formylmethionyl-tRNA from spontaneous hydrolysis and promotes its binding to the 30S ribosomal subunits. Also involved in the hydrolysis of GTP during the formation of the 70S ribosomal complex.</text>
</comment>
<comment type="subcellular location">
    <subcellularLocation>
        <location evidence="2">Cytoplasm</location>
    </subcellularLocation>
</comment>
<comment type="similarity">
    <text evidence="2">Belongs to the TRAFAC class translation factor GTPase superfamily. Classic translation factor GTPase family. IF-2 subfamily.</text>
</comment>
<sequence length="1038" mass="111597">MNNGKVRIYELSKELNLDNKELLAICDQLNIAVKSHSSTISESEAESIRAAAEKLAATNGTSKKELNTTSHKPNSAPAGSRNRPAPPQKQQQILEIRKPKILRNTTSNAPEASVANNQIASSEANSPAPPRPFATPVSPMKPTAPSRPVPRNLSETPQKPAAPEAEPEAQSQAPAKIAVEKPEKSAQPRPGKPERQPKPQLVAPPSRPTAEKLDLSEITGAPGEKPILKRDRPRREDERDQAKPRVAKPAQGETSSAPVQKQARPAQGPVKPEQRVNRPGAPSGDGIRPQRPVRPSVDAAPVATPPRGVPGGRGEVGDTAAIAPDLLDLKRPTPPRLAKGGKKWQEEEIIDEIKEKAGKAGVKGKRVKPLVEDDFEDEDLLDEEGLEIPATVQVSLSIARPPKPKAARAATAATAAPISSPTTRGKRSSHNNRDQNRRQETEVKRERPEKVAVTGPMTVQELADLLAVADTEIVKILFMKGMAVSITQNLDIPTITLVGKELEIEVETAEPEAEARKVTEMIEVGDLEHLLRRPPVVTIMGHVDHGKTTLLDSIRKTKVAAGEAGGITQHIGAYHVDIVHDGKEQQIVFLDTPGHEAFTAMRARGARVTDIAVLVVAADDGVRPQTVEAISHAQAAGVPIVVAINKIDKEGAQPDRVKQELTQYGLTPEEWGGETIMVPVSAIKGENLDTLLEMILLVAEVGELSANPDRNARGTVIEAHLDKAKGAVATLLIQNGTLHVGDILLAGSAFGKVRAMVDDRGRRVDIAGPSFAVEVLGLSDVPAAGDEFEVFDNEKEARALASDRADKQRLSRLLQGRVTLTTLSAQAQEGELKELNLILKGDVQGSVEAIVGSLKQIPQNEVQIRMLLTAAGEITETDIDLAAASGAVIIGFNTTFASGARQAADEAGVDVREYNIIYKLIEDIQGALEGLLEPELVEEPLGQTEVRAVFPVGRGAVAGCYVQSGKLVRNCKVRVRRAGKVIYEGVLDSLKRMKDDAREVNAGYECGIGVDKFHDWAEGDIIESYQMVTKRRTLALTR</sequence>
<name>IF2_TRIV2</name>
<evidence type="ECO:0000250" key="1"/>
<evidence type="ECO:0000255" key="2">
    <source>
        <dbReference type="HAMAP-Rule" id="MF_00100"/>
    </source>
</evidence>
<evidence type="ECO:0000256" key="3">
    <source>
        <dbReference type="SAM" id="MobiDB-lite"/>
    </source>
</evidence>
<feature type="chain" id="PRO_1000008197" description="Translation initiation factor IF-2">
    <location>
        <begin position="1"/>
        <end position="1038"/>
    </location>
</feature>
<feature type="domain" description="tr-type G">
    <location>
        <begin position="532"/>
        <end position="705"/>
    </location>
</feature>
<feature type="region of interest" description="Disordered" evidence="3">
    <location>
        <begin position="39"/>
        <end position="346"/>
    </location>
</feature>
<feature type="region of interest" description="Disordered" evidence="3">
    <location>
        <begin position="403"/>
        <end position="451"/>
    </location>
</feature>
<feature type="region of interest" description="G1" evidence="1">
    <location>
        <begin position="541"/>
        <end position="548"/>
    </location>
</feature>
<feature type="region of interest" description="G2" evidence="1">
    <location>
        <begin position="566"/>
        <end position="570"/>
    </location>
</feature>
<feature type="region of interest" description="G3" evidence="1">
    <location>
        <begin position="591"/>
        <end position="594"/>
    </location>
</feature>
<feature type="region of interest" description="G4" evidence="1">
    <location>
        <begin position="645"/>
        <end position="648"/>
    </location>
</feature>
<feature type="region of interest" description="G5" evidence="1">
    <location>
        <begin position="681"/>
        <end position="683"/>
    </location>
</feature>
<feature type="compositionally biased region" description="Polar residues" evidence="3">
    <location>
        <begin position="103"/>
        <end position="125"/>
    </location>
</feature>
<feature type="compositionally biased region" description="Low complexity" evidence="3">
    <location>
        <begin position="157"/>
        <end position="176"/>
    </location>
</feature>
<feature type="compositionally biased region" description="Basic and acidic residues" evidence="3">
    <location>
        <begin position="178"/>
        <end position="197"/>
    </location>
</feature>
<feature type="compositionally biased region" description="Basic and acidic residues" evidence="3">
    <location>
        <begin position="226"/>
        <end position="243"/>
    </location>
</feature>
<feature type="compositionally biased region" description="Low complexity" evidence="3">
    <location>
        <begin position="407"/>
        <end position="423"/>
    </location>
</feature>
<feature type="compositionally biased region" description="Basic and acidic residues" evidence="3">
    <location>
        <begin position="431"/>
        <end position="450"/>
    </location>
</feature>
<feature type="binding site" evidence="2">
    <location>
        <begin position="541"/>
        <end position="548"/>
    </location>
    <ligand>
        <name>GTP</name>
        <dbReference type="ChEBI" id="CHEBI:37565"/>
    </ligand>
</feature>
<feature type="binding site" evidence="2">
    <location>
        <begin position="591"/>
        <end position="595"/>
    </location>
    <ligand>
        <name>GTP</name>
        <dbReference type="ChEBI" id="CHEBI:37565"/>
    </ligand>
</feature>
<feature type="binding site" evidence="2">
    <location>
        <begin position="645"/>
        <end position="648"/>
    </location>
    <ligand>
        <name>GTP</name>
        <dbReference type="ChEBI" id="CHEBI:37565"/>
    </ligand>
</feature>